<keyword id="KW-0963">Cytoplasm</keyword>
<keyword id="KW-0489">Methyltransferase</keyword>
<keyword id="KW-1185">Reference proteome</keyword>
<keyword id="KW-0698">rRNA processing</keyword>
<keyword id="KW-0949">S-adenosyl-L-methionine</keyword>
<keyword id="KW-0808">Transferase</keyword>
<evidence type="ECO:0000255" key="1">
    <source>
        <dbReference type="HAMAP-Rule" id="MF_00074"/>
    </source>
</evidence>
<accession>Q2Y5B5</accession>
<protein>
    <recommendedName>
        <fullName evidence="1">Ribosomal RNA small subunit methyltransferase G</fullName>
        <ecNumber evidence="1">2.1.1.170</ecNumber>
    </recommendedName>
    <alternativeName>
        <fullName evidence="1">16S rRNA 7-methylguanosine methyltransferase</fullName>
        <shortName evidence="1">16S rRNA m7G methyltransferase</shortName>
    </alternativeName>
</protein>
<sequence>MNPATQLADGIATLGLSITESNQARLLQYLALIQKWNRVHNLTAVREPEAMLALHVLDSLAVLPHIGGSRIADVGSGAGLPGIPVALARPEWRVVLVESNHKKAAFLQQARIELGLENVEVIGERMEGVRSNAGFNTVISRAFSDLADFVKLAGHLCARGEEQGTDCGRLVAMKGVYPHEELAQLPETFIVDNILSLTIPGLRAKRHLVVLKRAGQ</sequence>
<comment type="function">
    <text evidence="1">Specifically methylates the N7 position of guanine in position 527 of 16S rRNA.</text>
</comment>
<comment type="catalytic activity">
    <reaction evidence="1">
        <text>guanosine(527) in 16S rRNA + S-adenosyl-L-methionine = N(7)-methylguanosine(527) in 16S rRNA + S-adenosyl-L-homocysteine</text>
        <dbReference type="Rhea" id="RHEA:42732"/>
        <dbReference type="Rhea" id="RHEA-COMP:10209"/>
        <dbReference type="Rhea" id="RHEA-COMP:10210"/>
        <dbReference type="ChEBI" id="CHEBI:57856"/>
        <dbReference type="ChEBI" id="CHEBI:59789"/>
        <dbReference type="ChEBI" id="CHEBI:74269"/>
        <dbReference type="ChEBI" id="CHEBI:74480"/>
        <dbReference type="EC" id="2.1.1.170"/>
    </reaction>
</comment>
<comment type="subcellular location">
    <subcellularLocation>
        <location evidence="1">Cytoplasm</location>
    </subcellularLocation>
</comment>
<comment type="similarity">
    <text evidence="1">Belongs to the methyltransferase superfamily. RNA methyltransferase RsmG family.</text>
</comment>
<dbReference type="EC" id="2.1.1.170" evidence="1"/>
<dbReference type="EMBL" id="CP000103">
    <property type="protein sequence ID" value="ABB76056.1"/>
    <property type="molecule type" value="Genomic_DNA"/>
</dbReference>
<dbReference type="RefSeq" id="WP_011382041.1">
    <property type="nucleotide sequence ID" value="NC_007614.1"/>
</dbReference>
<dbReference type="SMR" id="Q2Y5B5"/>
<dbReference type="STRING" id="323848.Nmul_A2769"/>
<dbReference type="KEGG" id="nmu:Nmul_A2769"/>
<dbReference type="eggNOG" id="COG0357">
    <property type="taxonomic scope" value="Bacteria"/>
</dbReference>
<dbReference type="HOGENOM" id="CLU_065341_2_0_4"/>
<dbReference type="OrthoDB" id="9808773at2"/>
<dbReference type="Proteomes" id="UP000002718">
    <property type="component" value="Chromosome"/>
</dbReference>
<dbReference type="GO" id="GO:0005829">
    <property type="term" value="C:cytosol"/>
    <property type="evidence" value="ECO:0007669"/>
    <property type="project" value="TreeGrafter"/>
</dbReference>
<dbReference type="GO" id="GO:0070043">
    <property type="term" value="F:rRNA (guanine-N7-)-methyltransferase activity"/>
    <property type="evidence" value="ECO:0007669"/>
    <property type="project" value="UniProtKB-UniRule"/>
</dbReference>
<dbReference type="CDD" id="cd02440">
    <property type="entry name" value="AdoMet_MTases"/>
    <property type="match status" value="1"/>
</dbReference>
<dbReference type="Gene3D" id="3.40.50.150">
    <property type="entry name" value="Vaccinia Virus protein VP39"/>
    <property type="match status" value="1"/>
</dbReference>
<dbReference type="HAMAP" id="MF_00074">
    <property type="entry name" value="16SrRNA_methyltr_G"/>
    <property type="match status" value="1"/>
</dbReference>
<dbReference type="InterPro" id="IPR003682">
    <property type="entry name" value="rRNA_ssu_MeTfrase_G"/>
</dbReference>
<dbReference type="InterPro" id="IPR029063">
    <property type="entry name" value="SAM-dependent_MTases_sf"/>
</dbReference>
<dbReference type="NCBIfam" id="TIGR00138">
    <property type="entry name" value="rsmG_gidB"/>
    <property type="match status" value="1"/>
</dbReference>
<dbReference type="PANTHER" id="PTHR31760">
    <property type="entry name" value="S-ADENOSYL-L-METHIONINE-DEPENDENT METHYLTRANSFERASES SUPERFAMILY PROTEIN"/>
    <property type="match status" value="1"/>
</dbReference>
<dbReference type="PANTHER" id="PTHR31760:SF0">
    <property type="entry name" value="S-ADENOSYL-L-METHIONINE-DEPENDENT METHYLTRANSFERASES SUPERFAMILY PROTEIN"/>
    <property type="match status" value="1"/>
</dbReference>
<dbReference type="Pfam" id="PF02527">
    <property type="entry name" value="GidB"/>
    <property type="match status" value="1"/>
</dbReference>
<dbReference type="PIRSF" id="PIRSF003078">
    <property type="entry name" value="GidB"/>
    <property type="match status" value="1"/>
</dbReference>
<dbReference type="SUPFAM" id="SSF53335">
    <property type="entry name" value="S-adenosyl-L-methionine-dependent methyltransferases"/>
    <property type="match status" value="1"/>
</dbReference>
<reference key="1">
    <citation type="submission" date="2005-08" db="EMBL/GenBank/DDBJ databases">
        <title>Complete sequence of chromosome 1 of Nitrosospira multiformis ATCC 25196.</title>
        <authorList>
            <person name="Copeland A."/>
            <person name="Lucas S."/>
            <person name="Lapidus A."/>
            <person name="Barry K."/>
            <person name="Detter J.C."/>
            <person name="Glavina T."/>
            <person name="Hammon N."/>
            <person name="Israni S."/>
            <person name="Pitluck S."/>
            <person name="Chain P."/>
            <person name="Malfatti S."/>
            <person name="Shin M."/>
            <person name="Vergez L."/>
            <person name="Schmutz J."/>
            <person name="Larimer F."/>
            <person name="Land M."/>
            <person name="Hauser L."/>
            <person name="Kyrpides N."/>
            <person name="Lykidis A."/>
            <person name="Richardson P."/>
        </authorList>
    </citation>
    <scope>NUCLEOTIDE SEQUENCE [LARGE SCALE GENOMIC DNA]</scope>
    <source>
        <strain>ATCC 25196 / NCIMB 11849 / C 71</strain>
    </source>
</reference>
<proteinExistence type="inferred from homology"/>
<name>RSMG_NITMU</name>
<feature type="chain" id="PRO_1000010174" description="Ribosomal RNA small subunit methyltransferase G">
    <location>
        <begin position="1"/>
        <end position="216"/>
    </location>
</feature>
<feature type="binding site" evidence="1">
    <location>
        <position position="75"/>
    </location>
    <ligand>
        <name>S-adenosyl-L-methionine</name>
        <dbReference type="ChEBI" id="CHEBI:59789"/>
    </ligand>
</feature>
<feature type="binding site" evidence="1">
    <location>
        <position position="80"/>
    </location>
    <ligand>
        <name>S-adenosyl-L-methionine</name>
        <dbReference type="ChEBI" id="CHEBI:59789"/>
    </ligand>
</feature>
<feature type="binding site" evidence="1">
    <location>
        <position position="141"/>
    </location>
    <ligand>
        <name>S-adenosyl-L-methionine</name>
        <dbReference type="ChEBI" id="CHEBI:59789"/>
    </ligand>
</feature>
<organism>
    <name type="scientific">Nitrosospira multiformis (strain ATCC 25196 / NCIMB 11849 / C 71)</name>
    <dbReference type="NCBI Taxonomy" id="323848"/>
    <lineage>
        <taxon>Bacteria</taxon>
        <taxon>Pseudomonadati</taxon>
        <taxon>Pseudomonadota</taxon>
        <taxon>Betaproteobacteria</taxon>
        <taxon>Nitrosomonadales</taxon>
        <taxon>Nitrosomonadaceae</taxon>
        <taxon>Nitrosospira</taxon>
    </lineage>
</organism>
<gene>
    <name evidence="1" type="primary">rsmG</name>
    <name type="ordered locus">Nmul_A2769</name>
</gene>